<dbReference type="EMBL" id="AL163817">
    <property type="protein sequence ID" value="CAB87767.1"/>
    <property type="status" value="ALT_SEQ"/>
    <property type="molecule type" value="Genomic_DNA"/>
</dbReference>
<dbReference type="EMBL" id="CP002688">
    <property type="protein sequence ID" value="AED92012.2"/>
    <property type="molecule type" value="Genomic_DNA"/>
</dbReference>
<dbReference type="PIR" id="T48601">
    <property type="entry name" value="T48601"/>
</dbReference>
<dbReference type="RefSeq" id="NP_001318559.1">
    <property type="nucleotide sequence ID" value="NM_001343331.1"/>
</dbReference>
<dbReference type="FunCoup" id="P0DKL0">
    <property type="interactions" value="1"/>
</dbReference>
<dbReference type="STRING" id="3702.P0DKL0"/>
<dbReference type="iPTMnet" id="P0DKL0"/>
<dbReference type="ProteomicsDB" id="228354"/>
<dbReference type="EnsemblPlants" id="AT5G14280.1">
    <property type="protein sequence ID" value="AT5G14280.1"/>
    <property type="gene ID" value="AT5G14280"/>
</dbReference>
<dbReference type="GeneID" id="831278"/>
<dbReference type="Gramene" id="AT5G14280.1">
    <property type="protein sequence ID" value="AT5G14280.1"/>
    <property type="gene ID" value="AT5G14280"/>
</dbReference>
<dbReference type="KEGG" id="ath:AT5G14280"/>
<dbReference type="Araport" id="AT5G14280"/>
<dbReference type="TAIR" id="AT5G14280">
    <property type="gene designation" value="GPL2"/>
</dbReference>
<dbReference type="eggNOG" id="ENOG502QTZA">
    <property type="taxonomic scope" value="Eukaryota"/>
</dbReference>
<dbReference type="InParanoid" id="P0DKL0"/>
<dbReference type="OMA" id="IRAYLHV"/>
<dbReference type="OrthoDB" id="661680at2759"/>
<dbReference type="PRO" id="PR:P0DKL0"/>
<dbReference type="Proteomes" id="UP000006548">
    <property type="component" value="Chromosome 5"/>
</dbReference>
<dbReference type="ExpressionAtlas" id="P0DKL0">
    <property type="expression patterns" value="baseline and differential"/>
</dbReference>
<dbReference type="GO" id="GO:0005634">
    <property type="term" value="C:nucleus"/>
    <property type="evidence" value="ECO:0007669"/>
    <property type="project" value="UniProtKB-SubCell"/>
</dbReference>
<dbReference type="GO" id="GO:0006355">
    <property type="term" value="P:regulation of DNA-templated transcription"/>
    <property type="evidence" value="ECO:0007669"/>
    <property type="project" value="InterPro"/>
</dbReference>
<dbReference type="InterPro" id="IPR007592">
    <property type="entry name" value="GEBP"/>
</dbReference>
<dbReference type="InterPro" id="IPR053932">
    <property type="entry name" value="GeBP-like_DBD"/>
</dbReference>
<dbReference type="PANTHER" id="PTHR31662">
    <property type="entry name" value="BNAANNG10740D PROTEIN-RELATED"/>
    <property type="match status" value="1"/>
</dbReference>
<dbReference type="PANTHER" id="PTHR31662:SF49">
    <property type="entry name" value="GLABROUS1 ENHANCER-BINDING PROTEIN-RELATED"/>
    <property type="match status" value="1"/>
</dbReference>
<dbReference type="Pfam" id="PF04504">
    <property type="entry name" value="GeBP-like_DBD"/>
    <property type="match status" value="1"/>
</dbReference>
<dbReference type="PROSITE" id="PS50922">
    <property type="entry name" value="TLC"/>
    <property type="match status" value="1"/>
</dbReference>
<proteinExistence type="evidence at protein level"/>
<feature type="chain" id="PRO_0000436993" description="GLABROUS1 enhancer-binding protein-like 2">
    <location>
        <begin position="1"/>
        <end position="301"/>
    </location>
</feature>
<feature type="region of interest" description="Disordered" evidence="1">
    <location>
        <begin position="1"/>
        <end position="62"/>
    </location>
</feature>
<feature type="region of interest" description="Non-canonical leucine-zipper" evidence="6">
    <location>
        <begin position="268"/>
        <end position="289"/>
    </location>
</feature>
<feature type="compositionally biased region" description="Basic residues" evidence="1">
    <location>
        <begin position="44"/>
        <end position="54"/>
    </location>
</feature>
<keyword id="KW-0539">Nucleus</keyword>
<keyword id="KW-1185">Reference proteome</keyword>
<keyword id="KW-0804">Transcription</keyword>
<keyword id="KW-0805">Transcription regulation</keyword>
<gene>
    <name evidence="4" type="primary">GPL2</name>
    <name evidence="7" type="ordered locus">At5g14280</name>
    <name evidence="8" type="ORF">F18O22_70</name>
</gene>
<reference key="1">
    <citation type="journal article" date="2000" name="Nature">
        <title>Sequence and analysis of chromosome 5 of the plant Arabidopsis thaliana.</title>
        <authorList>
            <person name="Tabata S."/>
            <person name="Kaneko T."/>
            <person name="Nakamura Y."/>
            <person name="Kotani H."/>
            <person name="Kato T."/>
            <person name="Asamizu E."/>
            <person name="Miyajima N."/>
            <person name="Sasamoto S."/>
            <person name="Kimura T."/>
            <person name="Hosouchi T."/>
            <person name="Kawashima K."/>
            <person name="Kohara M."/>
            <person name="Matsumoto M."/>
            <person name="Matsuno A."/>
            <person name="Muraki A."/>
            <person name="Nakayama S."/>
            <person name="Nakazaki N."/>
            <person name="Naruo K."/>
            <person name="Okumura S."/>
            <person name="Shinpo S."/>
            <person name="Takeuchi C."/>
            <person name="Wada T."/>
            <person name="Watanabe A."/>
            <person name="Yamada M."/>
            <person name="Yasuda M."/>
            <person name="Sato S."/>
            <person name="de la Bastide M."/>
            <person name="Huang E."/>
            <person name="Spiegel L."/>
            <person name="Gnoj L."/>
            <person name="O'Shaughnessy A."/>
            <person name="Preston R."/>
            <person name="Habermann K."/>
            <person name="Murray J."/>
            <person name="Johnson D."/>
            <person name="Rohlfing T."/>
            <person name="Nelson J."/>
            <person name="Stoneking T."/>
            <person name="Pepin K."/>
            <person name="Spieth J."/>
            <person name="Sekhon M."/>
            <person name="Armstrong J."/>
            <person name="Becker M."/>
            <person name="Belter E."/>
            <person name="Cordum H."/>
            <person name="Cordes M."/>
            <person name="Courtney L."/>
            <person name="Courtney W."/>
            <person name="Dante M."/>
            <person name="Du H."/>
            <person name="Edwards J."/>
            <person name="Fryman J."/>
            <person name="Haakensen B."/>
            <person name="Lamar E."/>
            <person name="Latreille P."/>
            <person name="Leonard S."/>
            <person name="Meyer R."/>
            <person name="Mulvaney E."/>
            <person name="Ozersky P."/>
            <person name="Riley A."/>
            <person name="Strowmatt C."/>
            <person name="Wagner-McPherson C."/>
            <person name="Wollam A."/>
            <person name="Yoakum M."/>
            <person name="Bell M."/>
            <person name="Dedhia N."/>
            <person name="Parnell L."/>
            <person name="Shah R."/>
            <person name="Rodriguez M."/>
            <person name="Hoon See L."/>
            <person name="Vil D."/>
            <person name="Baker J."/>
            <person name="Kirchoff K."/>
            <person name="Toth K."/>
            <person name="King L."/>
            <person name="Bahret A."/>
            <person name="Miller B."/>
            <person name="Marra M.A."/>
            <person name="Martienssen R."/>
            <person name="McCombie W.R."/>
            <person name="Wilson R.K."/>
            <person name="Murphy G."/>
            <person name="Bancroft I."/>
            <person name="Volckaert G."/>
            <person name="Wambutt R."/>
            <person name="Duesterhoeft A."/>
            <person name="Stiekema W."/>
            <person name="Pohl T."/>
            <person name="Entian K.-D."/>
            <person name="Terryn N."/>
            <person name="Hartley N."/>
            <person name="Bent E."/>
            <person name="Johnson S."/>
            <person name="Langham S.-A."/>
            <person name="McCullagh B."/>
            <person name="Robben J."/>
            <person name="Grymonprez B."/>
            <person name="Zimmermann W."/>
            <person name="Ramsperger U."/>
            <person name="Wedler H."/>
            <person name="Balke K."/>
            <person name="Wedler E."/>
            <person name="Peters S."/>
            <person name="van Staveren M."/>
            <person name="Dirkse W."/>
            <person name="Mooijman P."/>
            <person name="Klein Lankhorst R."/>
            <person name="Weitzenegger T."/>
            <person name="Bothe G."/>
            <person name="Rose M."/>
            <person name="Hauf J."/>
            <person name="Berneiser S."/>
            <person name="Hempel S."/>
            <person name="Feldpausch M."/>
            <person name="Lamberth S."/>
            <person name="Villarroel R."/>
            <person name="Gielen J."/>
            <person name="Ardiles W."/>
            <person name="Bents O."/>
            <person name="Lemcke K."/>
            <person name="Kolesov G."/>
            <person name="Mayer K.F.X."/>
            <person name="Rudd S."/>
            <person name="Schoof H."/>
            <person name="Schueller C."/>
            <person name="Zaccaria P."/>
            <person name="Mewes H.-W."/>
            <person name="Bevan M."/>
            <person name="Fransz P.F."/>
        </authorList>
    </citation>
    <scope>NUCLEOTIDE SEQUENCE [LARGE SCALE GENOMIC DNA]</scope>
    <source>
        <strain>cv. Columbia</strain>
    </source>
</reference>
<reference key="2">
    <citation type="journal article" date="2017" name="Plant J.">
        <title>Araport11: a complete reannotation of the Arabidopsis thaliana reference genome.</title>
        <authorList>
            <person name="Cheng C.Y."/>
            <person name="Krishnakumar V."/>
            <person name="Chan A.P."/>
            <person name="Thibaud-Nissen F."/>
            <person name="Schobel S."/>
            <person name="Town C.D."/>
        </authorList>
    </citation>
    <scope>GENOME REANNOTATION</scope>
    <source>
        <strain>cv. Columbia</strain>
    </source>
</reference>
<reference key="3">
    <citation type="journal article" date="2003" name="Plant J.">
        <title>GeBP, the first member of a new gene family in Arabidopsis, encodes a nuclear protein with DNA-binding activity and is regulated by KNAT1.</title>
        <authorList>
            <person name="Curaba J."/>
            <person name="Herzog M."/>
            <person name="Vachon G."/>
        </authorList>
    </citation>
    <scope>GENE FAMILY</scope>
</reference>
<reference key="4">
    <citation type="journal article" date="2008" name="Plant Physiol.">
        <title>GeBP and GeBP-like proteins are noncanonical leucine-zipper transcription factors that regulate cytokinin response in Arabidopsis.</title>
        <authorList>
            <person name="Chevalier F."/>
            <person name="Perazza D."/>
            <person name="Laporte F."/>
            <person name="Le Henanff G."/>
            <person name="Hornitschek P."/>
            <person name="Bonneville J.M."/>
            <person name="Herzog M."/>
            <person name="Vachon G."/>
        </authorList>
    </citation>
    <scope>INTERACTION WITH GEBP; GPL1 AND GPL3</scope>
    <scope>SUBUNIT</scope>
    <scope>SUBCELLULAR LOCATION</scope>
    <scope>TISSUE SPECIFICITY</scope>
</reference>
<reference key="5">
    <citation type="journal article" date="2011" name="Plant Physiol.">
        <title>GeBP/GPL transcription factors regulate a subset of CPR5-dependent processes.</title>
        <authorList>
            <person name="Perazza D."/>
            <person name="Laporte F."/>
            <person name="Balague C."/>
            <person name="Chevalier F."/>
            <person name="Remo S."/>
            <person name="Bourge M."/>
            <person name="Larkin J."/>
            <person name="Herzog M."/>
            <person name="Vachon G."/>
        </authorList>
    </citation>
    <scope>FUNCTION</scope>
</reference>
<comment type="function">
    <text evidence="3 6">Probable transcription factor. May play redundant roles with GEBP and GPL1 in cytokinin responses by regulating the transcript levels of type-A ARR response genes. Involved in stress responses (PubMed:21875893). Plays a repressive role in cell expansion by counteracting the positive role of CPR5 in this process, but does not regulate cell proliferation or endoreduplication (PubMed:21875893).</text>
</comment>
<comment type="subunit">
    <text evidence="2">Homo- and heterodimers. Interacts with GEBP, GPL1 and GPL3.</text>
</comment>
<comment type="subcellular location">
    <subcellularLocation>
        <location evidence="2">Nucleus</location>
    </subcellularLocation>
</comment>
<comment type="tissue specificity">
    <text evidence="2">Expressed in the apical meristem and young leaf primordia. Detected in the vascular tissues of cotyledons and leaves, in hydathodes and in the septun of siliques, but not in roots.</text>
</comment>
<comment type="similarity">
    <text evidence="5">Belongs to the GeBP family.</text>
</comment>
<comment type="sequence caution" evidence="5">
    <conflict type="erroneous gene model prediction">
        <sequence resource="EMBL-CDS" id="CAB87767"/>
    </conflict>
    <text>The predicted gene At5g14280 has been split into 2 genes: At5g14280 and At5g14285.</text>
</comment>
<comment type="online information" name="Plant Transcription Factor Database">
    <link uri="https://planttfdb.gao-lab.org/family.php?fam=GeBP#family_intro"/>
</comment>
<evidence type="ECO:0000256" key="1">
    <source>
        <dbReference type="SAM" id="MobiDB-lite"/>
    </source>
</evidence>
<evidence type="ECO:0000269" key="2">
    <source>
    </source>
</evidence>
<evidence type="ECO:0000269" key="3">
    <source>
    </source>
</evidence>
<evidence type="ECO:0000303" key="4">
    <source>
    </source>
</evidence>
<evidence type="ECO:0000305" key="5"/>
<evidence type="ECO:0000305" key="6">
    <source>
    </source>
</evidence>
<evidence type="ECO:0000312" key="7">
    <source>
        <dbReference type="Araport" id="AT5G14280"/>
    </source>
</evidence>
<evidence type="ECO:0000312" key="8">
    <source>
        <dbReference type="EMBL" id="CAB87767.1"/>
    </source>
</evidence>
<accession>P0DKL0</accession>
<accession>Q9LYA1</accession>
<sequence length="301" mass="33721">MATPTELGFSSPGGGGDDSDDNPPQKRTSKRTASETATEEETKKKKKKKTKHNTKMASPPSNRIWNEEDELSILKGLVDFRAKTGLESKIDWDAFYCYVKGSIHVKVSKCQLMSKTRKLKKKFLDQMEKIDQGNDPHFTRSSETEAFGYSMMIWRKIDAEYTNGVMDKAHQSESGEEVFEEDEEVALIDKGAAKSGKSPHEAVVVVDKITTKKNGTAGKESDDDDDDVLCAVRDAFETTMMSQGLSDYQKKLQLEKLMNLGTGKRRELSNEWKALCVEELKLNINKLRFSAKLAEAANDGK</sequence>
<name>STKLT_ARATH</name>
<protein>
    <recommendedName>
        <fullName evidence="4">GLABROUS1 enhancer-binding protein-like 2</fullName>
    </recommendedName>
    <alternativeName>
        <fullName evidence="4">Protein GPL2</fullName>
    </alternativeName>
    <alternativeName>
        <fullName evidence="5">Storekeeper-like protein At5g14280</fullName>
    </alternativeName>
</protein>
<organism>
    <name type="scientific">Arabidopsis thaliana</name>
    <name type="common">Mouse-ear cress</name>
    <dbReference type="NCBI Taxonomy" id="3702"/>
    <lineage>
        <taxon>Eukaryota</taxon>
        <taxon>Viridiplantae</taxon>
        <taxon>Streptophyta</taxon>
        <taxon>Embryophyta</taxon>
        <taxon>Tracheophyta</taxon>
        <taxon>Spermatophyta</taxon>
        <taxon>Magnoliopsida</taxon>
        <taxon>eudicotyledons</taxon>
        <taxon>Gunneridae</taxon>
        <taxon>Pentapetalae</taxon>
        <taxon>rosids</taxon>
        <taxon>malvids</taxon>
        <taxon>Brassicales</taxon>
        <taxon>Brassicaceae</taxon>
        <taxon>Camelineae</taxon>
        <taxon>Arabidopsis</taxon>
    </lineage>
</organism>